<feature type="chain" id="PRO_1000145884" description="Probable chemoreceptor glutamine deamidase CheD">
    <location>
        <begin position="1"/>
        <end position="163"/>
    </location>
</feature>
<proteinExistence type="inferred from homology"/>
<evidence type="ECO:0000255" key="1">
    <source>
        <dbReference type="HAMAP-Rule" id="MF_01440"/>
    </source>
</evidence>
<name>CHED_BORBZ</name>
<keyword id="KW-0145">Chemotaxis</keyword>
<keyword id="KW-0378">Hydrolase</keyword>
<accession>B7J2G8</accession>
<protein>
    <recommendedName>
        <fullName evidence="1">Probable chemoreceptor glutamine deamidase CheD</fullName>
        <ecNumber evidence="1">3.5.1.44</ecNumber>
    </recommendedName>
</protein>
<dbReference type="EC" id="3.5.1.44" evidence="1"/>
<dbReference type="EMBL" id="CP001205">
    <property type="protein sequence ID" value="ACK75049.1"/>
    <property type="molecule type" value="Genomic_DNA"/>
</dbReference>
<dbReference type="RefSeq" id="WP_002658115.1">
    <property type="nucleotide sequence ID" value="NC_011728.1"/>
</dbReference>
<dbReference type="SMR" id="B7J2G8"/>
<dbReference type="GeneID" id="56568039"/>
<dbReference type="KEGG" id="bbz:BbuZS7_0620"/>
<dbReference type="HOGENOM" id="CLU_087854_0_0_12"/>
<dbReference type="Proteomes" id="UP000006901">
    <property type="component" value="Chromosome"/>
</dbReference>
<dbReference type="GO" id="GO:0050568">
    <property type="term" value="F:protein-glutamine glutaminase activity"/>
    <property type="evidence" value="ECO:0007669"/>
    <property type="project" value="UniProtKB-UniRule"/>
</dbReference>
<dbReference type="GO" id="GO:0006935">
    <property type="term" value="P:chemotaxis"/>
    <property type="evidence" value="ECO:0007669"/>
    <property type="project" value="UniProtKB-UniRule"/>
</dbReference>
<dbReference type="CDD" id="cd16352">
    <property type="entry name" value="CheD"/>
    <property type="match status" value="1"/>
</dbReference>
<dbReference type="Gene3D" id="3.30.1330.200">
    <property type="match status" value="1"/>
</dbReference>
<dbReference type="HAMAP" id="MF_01440">
    <property type="entry name" value="CheD"/>
    <property type="match status" value="1"/>
</dbReference>
<dbReference type="InterPro" id="IPR038592">
    <property type="entry name" value="CheD-like_sf"/>
</dbReference>
<dbReference type="InterPro" id="IPR005659">
    <property type="entry name" value="Chemorcpt_Glu_NH3ase_CheD"/>
</dbReference>
<dbReference type="InterPro" id="IPR011324">
    <property type="entry name" value="Cytotoxic_necrot_fac-like_cat"/>
</dbReference>
<dbReference type="NCBIfam" id="NF010017">
    <property type="entry name" value="PRK13494.1"/>
    <property type="match status" value="1"/>
</dbReference>
<dbReference type="PANTHER" id="PTHR35147">
    <property type="entry name" value="CHEMORECEPTOR GLUTAMINE DEAMIDASE CHED-RELATED"/>
    <property type="match status" value="1"/>
</dbReference>
<dbReference type="PANTHER" id="PTHR35147:SF2">
    <property type="entry name" value="CHEMORECEPTOR GLUTAMINE DEAMIDASE CHED-RELATED"/>
    <property type="match status" value="1"/>
</dbReference>
<dbReference type="Pfam" id="PF03975">
    <property type="entry name" value="CheD"/>
    <property type="match status" value="1"/>
</dbReference>
<dbReference type="SUPFAM" id="SSF64438">
    <property type="entry name" value="CNF1/YfiH-like putative cysteine hydrolases"/>
    <property type="match status" value="1"/>
</dbReference>
<gene>
    <name evidence="1" type="primary">cheD</name>
    <name type="ordered locus">BbuZS7_0620</name>
</gene>
<organism>
    <name type="scientific">Borreliella burgdorferi (strain ZS7)</name>
    <name type="common">Borrelia burgdorferi</name>
    <dbReference type="NCBI Taxonomy" id="445985"/>
    <lineage>
        <taxon>Bacteria</taxon>
        <taxon>Pseudomonadati</taxon>
        <taxon>Spirochaetota</taxon>
        <taxon>Spirochaetia</taxon>
        <taxon>Spirochaetales</taxon>
        <taxon>Borreliaceae</taxon>
        <taxon>Borreliella</taxon>
    </lineage>
</organism>
<sequence length="163" mass="18141">MLNHFNFKLKRDVTIIVPGEAFVSNKRVISTILGSCVAVVLCDESNNLIGMNHYVLVKSDLDISPDQRGRYGIYAIPMLINAMLENGASKSNLKAKLFGGTNFMAKGSVKVGLENSEFAVNTLNKYRIPILAKDFDQSKSRKIFAFPENFKVIVEYPDGTKVF</sequence>
<reference key="1">
    <citation type="journal article" date="2011" name="J. Bacteriol.">
        <title>Whole-genome sequences of thirteen isolates of Borrelia burgdorferi.</title>
        <authorList>
            <person name="Schutzer S.E."/>
            <person name="Fraser-Liggett C.M."/>
            <person name="Casjens S.R."/>
            <person name="Qiu W.G."/>
            <person name="Dunn J.J."/>
            <person name="Mongodin E.F."/>
            <person name="Luft B.J."/>
        </authorList>
    </citation>
    <scope>NUCLEOTIDE SEQUENCE [LARGE SCALE GENOMIC DNA]</scope>
    <source>
        <strain>ZS7</strain>
    </source>
</reference>
<comment type="function">
    <text evidence="1">Probably deamidates glutamine residues to glutamate on methyl-accepting chemotaxis receptors (MCPs), playing an important role in chemotaxis.</text>
</comment>
<comment type="catalytic activity">
    <reaction evidence="1">
        <text>L-glutaminyl-[protein] + H2O = L-glutamyl-[protein] + NH4(+)</text>
        <dbReference type="Rhea" id="RHEA:16441"/>
        <dbReference type="Rhea" id="RHEA-COMP:10207"/>
        <dbReference type="Rhea" id="RHEA-COMP:10208"/>
        <dbReference type="ChEBI" id="CHEBI:15377"/>
        <dbReference type="ChEBI" id="CHEBI:28938"/>
        <dbReference type="ChEBI" id="CHEBI:29973"/>
        <dbReference type="ChEBI" id="CHEBI:30011"/>
        <dbReference type="EC" id="3.5.1.44"/>
    </reaction>
</comment>
<comment type="similarity">
    <text evidence="1">Belongs to the CheD family.</text>
</comment>